<proteinExistence type="evidence at transcript level"/>
<evidence type="ECO:0000250" key="1">
    <source>
        <dbReference type="UniProtKB" id="O95197"/>
    </source>
</evidence>
<evidence type="ECO:0000250" key="2">
    <source>
        <dbReference type="UniProtKB" id="Q5J6M8"/>
    </source>
</evidence>
<evidence type="ECO:0000255" key="3"/>
<evidence type="ECO:0000255" key="4">
    <source>
        <dbReference type="PROSITE-ProRule" id="PRU00170"/>
    </source>
</evidence>
<evidence type="ECO:0000256" key="5">
    <source>
        <dbReference type="SAM" id="MobiDB-lite"/>
    </source>
</evidence>
<protein>
    <recommendedName>
        <fullName>Reticulon-3-B</fullName>
    </recommendedName>
    <alternativeName>
        <fullName>RTN3.2</fullName>
    </alternativeName>
</protein>
<organism>
    <name type="scientific">Xenopus laevis</name>
    <name type="common">African clawed frog</name>
    <dbReference type="NCBI Taxonomy" id="8355"/>
    <lineage>
        <taxon>Eukaryota</taxon>
        <taxon>Metazoa</taxon>
        <taxon>Chordata</taxon>
        <taxon>Craniata</taxon>
        <taxon>Vertebrata</taxon>
        <taxon>Euteleostomi</taxon>
        <taxon>Amphibia</taxon>
        <taxon>Batrachia</taxon>
        <taxon>Anura</taxon>
        <taxon>Pipoidea</taxon>
        <taxon>Pipidae</taxon>
        <taxon>Xenopodinae</taxon>
        <taxon>Xenopus</taxon>
        <taxon>Xenopus</taxon>
    </lineage>
</organism>
<dbReference type="EMBL" id="BC080089">
    <property type="protein sequence ID" value="AAH80089.1"/>
    <property type="molecule type" value="mRNA"/>
</dbReference>
<dbReference type="EMBL" id="CD303290">
    <property type="status" value="NOT_ANNOTATED_CDS"/>
    <property type="molecule type" value="mRNA"/>
</dbReference>
<dbReference type="EMBL" id="BK004057">
    <property type="protein sequence ID" value="DAA05161.1"/>
    <property type="molecule type" value="mRNA"/>
</dbReference>
<dbReference type="SMR" id="Q68EW1"/>
<dbReference type="DNASU" id="447369"/>
<dbReference type="GeneID" id="447369"/>
<dbReference type="KEGG" id="xla:447369"/>
<dbReference type="AGR" id="Xenbase:XB-GENE-6253993"/>
<dbReference type="CTD" id="447369"/>
<dbReference type="Xenbase" id="XB-GENE-6253993">
    <property type="gene designation" value="rtn3.S"/>
</dbReference>
<dbReference type="OrthoDB" id="567788at2759"/>
<dbReference type="Proteomes" id="UP000186698">
    <property type="component" value="Chromosome 4S"/>
</dbReference>
<dbReference type="GO" id="GO:0005783">
    <property type="term" value="C:endoplasmic reticulum"/>
    <property type="evidence" value="ECO:0000250"/>
    <property type="project" value="UniProtKB"/>
</dbReference>
<dbReference type="GO" id="GO:0005789">
    <property type="term" value="C:endoplasmic reticulum membrane"/>
    <property type="evidence" value="ECO:0000318"/>
    <property type="project" value="GO_Central"/>
</dbReference>
<dbReference type="GO" id="GO:0005794">
    <property type="term" value="C:Golgi apparatus"/>
    <property type="evidence" value="ECO:0000250"/>
    <property type="project" value="UniProtKB"/>
</dbReference>
<dbReference type="GO" id="GO:0000139">
    <property type="term" value="C:Golgi membrane"/>
    <property type="evidence" value="ECO:0007669"/>
    <property type="project" value="UniProtKB-SubCell"/>
</dbReference>
<dbReference type="GO" id="GO:0043005">
    <property type="term" value="C:neuron projection"/>
    <property type="evidence" value="ECO:0000318"/>
    <property type="project" value="GO_Central"/>
</dbReference>
<dbReference type="GO" id="GO:0014069">
    <property type="term" value="C:postsynaptic density"/>
    <property type="evidence" value="ECO:0000318"/>
    <property type="project" value="GO_Central"/>
</dbReference>
<dbReference type="GO" id="GO:0007420">
    <property type="term" value="P:brain development"/>
    <property type="evidence" value="ECO:0000318"/>
    <property type="project" value="GO_Central"/>
</dbReference>
<dbReference type="GO" id="GO:0071787">
    <property type="term" value="P:endoplasmic reticulum tubular network formation"/>
    <property type="evidence" value="ECO:0000318"/>
    <property type="project" value="GO_Central"/>
</dbReference>
<dbReference type="GO" id="GO:1902430">
    <property type="term" value="P:negative regulation of amyloid-beta formation"/>
    <property type="evidence" value="ECO:0000250"/>
    <property type="project" value="UniProtKB"/>
</dbReference>
<dbReference type="GO" id="GO:0030182">
    <property type="term" value="P:neuron differentiation"/>
    <property type="evidence" value="ECO:0000318"/>
    <property type="project" value="GO_Central"/>
</dbReference>
<dbReference type="GO" id="GO:0016192">
    <property type="term" value="P:vesicle-mediated transport"/>
    <property type="evidence" value="ECO:0007669"/>
    <property type="project" value="UniProtKB-KW"/>
</dbReference>
<dbReference type="Gene3D" id="1.20.5.2480">
    <property type="match status" value="1"/>
</dbReference>
<dbReference type="InterPro" id="IPR003388">
    <property type="entry name" value="Reticulon"/>
</dbReference>
<dbReference type="InterPro" id="IPR046964">
    <property type="entry name" value="RTN1-4"/>
</dbReference>
<dbReference type="PANTHER" id="PTHR45799:SF4">
    <property type="entry name" value="RETICULON-3"/>
    <property type="match status" value="1"/>
</dbReference>
<dbReference type="PANTHER" id="PTHR45799">
    <property type="entry name" value="RETICULON-LIKE PROTEIN"/>
    <property type="match status" value="1"/>
</dbReference>
<dbReference type="Pfam" id="PF02453">
    <property type="entry name" value="Reticulon"/>
    <property type="match status" value="1"/>
</dbReference>
<dbReference type="PROSITE" id="PS50845">
    <property type="entry name" value="RETICULON"/>
    <property type="match status" value="1"/>
</dbReference>
<accession>Q68EW1</accession>
<keyword id="KW-0256">Endoplasmic reticulum</keyword>
<keyword id="KW-0931">ER-Golgi transport</keyword>
<keyword id="KW-0333">Golgi apparatus</keyword>
<keyword id="KW-0472">Membrane</keyword>
<keyword id="KW-1185">Reference proteome</keyword>
<keyword id="KW-0812">Transmembrane</keyword>
<keyword id="KW-1133">Transmembrane helix</keyword>
<keyword id="KW-0813">Transport</keyword>
<reference key="1">
    <citation type="submission" date="2004-08" db="EMBL/GenBank/DDBJ databases">
        <authorList>
            <consortium name="NIH - Xenopus Gene Collection (XGC) project"/>
        </authorList>
    </citation>
    <scope>NUCLEOTIDE SEQUENCE [LARGE SCALE MRNA]</scope>
    <source>
        <tissue>Brain</tissue>
    </source>
</reference>
<reference key="2">
    <citation type="journal article" date="2005" name="Mol. Biol. Evol.">
        <title>Analysis of the reticulon gene family demonstrates the absence of the neurite growth inhibitor Nogo-A in fish.</title>
        <authorList>
            <person name="Diekmann H."/>
            <person name="Klinger M."/>
            <person name="Oertle T."/>
            <person name="Heinz D."/>
            <person name="Pogoda H.-M."/>
            <person name="Schwab M.E."/>
            <person name="Stuermer C.A.O."/>
        </authorList>
    </citation>
    <scope>IDENTIFICATION</scope>
</reference>
<feature type="chain" id="PRO_0000280543" description="Reticulon-3-B">
    <location>
        <begin position="1"/>
        <end position="214"/>
    </location>
</feature>
<feature type="transmembrane region" description="Helical" evidence="3">
    <location>
        <begin position="46"/>
        <end position="66"/>
    </location>
</feature>
<feature type="transmembrane region" description="Helical" evidence="3">
    <location>
        <begin position="150"/>
        <end position="170"/>
    </location>
</feature>
<feature type="domain" description="Reticulon" evidence="4">
    <location>
        <begin position="26"/>
        <end position="214"/>
    </location>
</feature>
<feature type="region of interest" description="Disordered" evidence="5">
    <location>
        <begin position="1"/>
        <end position="22"/>
    </location>
</feature>
<gene>
    <name type="primary">rtn3-b</name>
</gene>
<sequence length="214" mass="23360">MAETSGPQSSHISSSSAGDKGSGCAVRDLLYWRDVKQSGMVFGGTMVLLLSLAAFSIISVISYLVLSLLSVTISFRVYKSVLQAVQKTEEGHPFKPLLEKDIALSSDSFQKGLSSSLAHVNHALKSIVRLFLVEDLVDSLKLALLMWLMTYIGAVFNGITLLILGVLLAFTTPLVYEKYKVQIDHYVSLVHSQVKSITEKIQAKLPGALKKKSE</sequence>
<name>RTN3B_XENLA</name>
<comment type="function">
    <text evidence="1">May be involved in membrane trafficking in the early secretory pathway.</text>
</comment>
<comment type="subunit">
    <text evidence="1">Homodimer.</text>
</comment>
<comment type="subcellular location">
    <subcellularLocation>
        <location evidence="2">Endoplasmic reticulum membrane</location>
        <topology evidence="3">Multi-pass membrane protein</topology>
    </subcellularLocation>
    <subcellularLocation>
        <location evidence="1">Golgi apparatus membrane</location>
        <topology evidence="3">Multi-pass membrane protein</topology>
    </subcellularLocation>
</comment>